<comment type="function">
    <text evidence="1">Could be a nuclease involved in processing of the 5'-end of pre-16S rRNA.</text>
</comment>
<comment type="subcellular location">
    <subcellularLocation>
        <location evidence="1">Cytoplasm</location>
    </subcellularLocation>
</comment>
<comment type="similarity">
    <text evidence="1">Belongs to the YqgF nuclease family.</text>
</comment>
<keyword id="KW-0963">Cytoplasm</keyword>
<keyword id="KW-0378">Hydrolase</keyword>
<keyword id="KW-0540">Nuclease</keyword>
<keyword id="KW-0690">Ribosome biogenesis</keyword>
<dbReference type="EC" id="3.1.-.-" evidence="1"/>
<dbReference type="EMBL" id="CP001176">
    <property type="protein sequence ID" value="ACK60859.1"/>
    <property type="molecule type" value="Genomic_DNA"/>
</dbReference>
<dbReference type="SMR" id="B7HE21"/>
<dbReference type="KEGG" id="bcb:BCB4264_A4506"/>
<dbReference type="HOGENOM" id="CLU_098240_2_0_9"/>
<dbReference type="Proteomes" id="UP000007096">
    <property type="component" value="Chromosome"/>
</dbReference>
<dbReference type="GO" id="GO:0005829">
    <property type="term" value="C:cytosol"/>
    <property type="evidence" value="ECO:0007669"/>
    <property type="project" value="TreeGrafter"/>
</dbReference>
<dbReference type="GO" id="GO:0004518">
    <property type="term" value="F:nuclease activity"/>
    <property type="evidence" value="ECO:0007669"/>
    <property type="project" value="UniProtKB-KW"/>
</dbReference>
<dbReference type="GO" id="GO:0000967">
    <property type="term" value="P:rRNA 5'-end processing"/>
    <property type="evidence" value="ECO:0007669"/>
    <property type="project" value="UniProtKB-UniRule"/>
</dbReference>
<dbReference type="CDD" id="cd16964">
    <property type="entry name" value="YqgF"/>
    <property type="match status" value="1"/>
</dbReference>
<dbReference type="FunFam" id="3.30.420.140:FF:000003">
    <property type="entry name" value="Putative pre-16S rRNA nuclease"/>
    <property type="match status" value="1"/>
</dbReference>
<dbReference type="Gene3D" id="3.30.420.140">
    <property type="entry name" value="YqgF/RNase H-like domain"/>
    <property type="match status" value="1"/>
</dbReference>
<dbReference type="HAMAP" id="MF_00651">
    <property type="entry name" value="Nuclease_YqgF"/>
    <property type="match status" value="1"/>
</dbReference>
<dbReference type="InterPro" id="IPR012337">
    <property type="entry name" value="RNaseH-like_sf"/>
</dbReference>
<dbReference type="InterPro" id="IPR005227">
    <property type="entry name" value="YqgF"/>
</dbReference>
<dbReference type="InterPro" id="IPR006641">
    <property type="entry name" value="YqgF/RNaseH-like_dom"/>
</dbReference>
<dbReference type="InterPro" id="IPR037027">
    <property type="entry name" value="YqgF/RNaseH-like_dom_sf"/>
</dbReference>
<dbReference type="NCBIfam" id="TIGR00250">
    <property type="entry name" value="RNAse_H_YqgF"/>
    <property type="match status" value="1"/>
</dbReference>
<dbReference type="PANTHER" id="PTHR33317">
    <property type="entry name" value="POLYNUCLEOTIDYL TRANSFERASE, RIBONUCLEASE H-LIKE SUPERFAMILY PROTEIN"/>
    <property type="match status" value="1"/>
</dbReference>
<dbReference type="PANTHER" id="PTHR33317:SF4">
    <property type="entry name" value="POLYNUCLEOTIDYL TRANSFERASE, RIBONUCLEASE H-LIKE SUPERFAMILY PROTEIN"/>
    <property type="match status" value="1"/>
</dbReference>
<dbReference type="Pfam" id="PF03652">
    <property type="entry name" value="RuvX"/>
    <property type="match status" value="1"/>
</dbReference>
<dbReference type="SMART" id="SM00732">
    <property type="entry name" value="YqgFc"/>
    <property type="match status" value="1"/>
</dbReference>
<dbReference type="SUPFAM" id="SSF53098">
    <property type="entry name" value="Ribonuclease H-like"/>
    <property type="match status" value="1"/>
</dbReference>
<reference key="1">
    <citation type="submission" date="2008-10" db="EMBL/GenBank/DDBJ databases">
        <title>Genome sequence of Bacillus cereus B4264.</title>
        <authorList>
            <person name="Dodson R.J."/>
            <person name="Durkin A.S."/>
            <person name="Rosovitz M.J."/>
            <person name="Rasko D.A."/>
            <person name="Hoffmaster A."/>
            <person name="Ravel J."/>
            <person name="Sutton G."/>
        </authorList>
    </citation>
    <scope>NUCLEOTIDE SEQUENCE [LARGE SCALE GENOMIC DNA]</scope>
    <source>
        <strain>B4264</strain>
    </source>
</reference>
<sequence>MRILGLDVGTKTVGVAISDEMGWTAQGLETIKINEERGHFGFDRISELVKQYNVDKIVVGLPKNMNGTIGPRGEACQQFAENLRELLQLDVVMWDERLSTMAAERLLISADVSRKKRKQVIDKMAAVVILQGFLDRK</sequence>
<protein>
    <recommendedName>
        <fullName evidence="1">Putative pre-16S rRNA nuclease</fullName>
        <ecNumber evidence="1">3.1.-.-</ecNumber>
    </recommendedName>
</protein>
<accession>B7HE21</accession>
<organism>
    <name type="scientific">Bacillus cereus (strain B4264)</name>
    <dbReference type="NCBI Taxonomy" id="405532"/>
    <lineage>
        <taxon>Bacteria</taxon>
        <taxon>Bacillati</taxon>
        <taxon>Bacillota</taxon>
        <taxon>Bacilli</taxon>
        <taxon>Bacillales</taxon>
        <taxon>Bacillaceae</taxon>
        <taxon>Bacillus</taxon>
        <taxon>Bacillus cereus group</taxon>
    </lineage>
</organism>
<gene>
    <name type="ordered locus">BCB4264_A4506</name>
</gene>
<feature type="chain" id="PRO_1000130997" description="Putative pre-16S rRNA nuclease">
    <location>
        <begin position="1"/>
        <end position="137"/>
    </location>
</feature>
<evidence type="ECO:0000255" key="1">
    <source>
        <dbReference type="HAMAP-Rule" id="MF_00651"/>
    </source>
</evidence>
<proteinExistence type="inferred from homology"/>
<name>YQGF_BACC4</name>